<feature type="chain" id="PRO_0000454380" description="Ubiquitin C-terminal hydrolase 15">
    <location>
        <begin position="1"/>
        <end position="975"/>
    </location>
</feature>
<feature type="domain" description="USP" evidence="2">
    <location>
        <begin position="441"/>
        <end position="747"/>
    </location>
</feature>
<feature type="zinc finger region" description="MYND-type" evidence="1">
    <location>
        <begin position="88"/>
        <end position="125"/>
    </location>
</feature>
<feature type="region of interest" description="Disordered" evidence="3">
    <location>
        <begin position="301"/>
        <end position="378"/>
    </location>
</feature>
<feature type="region of interest" description="Disordered" evidence="3">
    <location>
        <begin position="764"/>
        <end position="783"/>
    </location>
</feature>
<feature type="compositionally biased region" description="Polar residues" evidence="3">
    <location>
        <begin position="309"/>
        <end position="322"/>
    </location>
</feature>
<feature type="compositionally biased region" description="Basic and acidic residues" evidence="3">
    <location>
        <begin position="354"/>
        <end position="369"/>
    </location>
</feature>
<feature type="active site" description="Nucleophile" evidence="2">
    <location>
        <position position="450"/>
    </location>
</feature>
<feature type="active site" description="Proton acceptor" evidence="2">
    <location>
        <position position="706"/>
    </location>
</feature>
<feature type="binding site" evidence="1">
    <location>
        <position position="88"/>
    </location>
    <ligand>
        <name>Zn(2+)</name>
        <dbReference type="ChEBI" id="CHEBI:29105"/>
        <label>1</label>
    </ligand>
</feature>
<feature type="binding site" evidence="1">
    <location>
        <position position="91"/>
    </location>
    <ligand>
        <name>Zn(2+)</name>
        <dbReference type="ChEBI" id="CHEBI:29105"/>
        <label>1</label>
    </ligand>
</feature>
<feature type="binding site" evidence="1">
    <location>
        <position position="99"/>
    </location>
    <ligand>
        <name>Zn(2+)</name>
        <dbReference type="ChEBI" id="CHEBI:29105"/>
        <label>2</label>
    </ligand>
</feature>
<feature type="binding site" evidence="1">
    <location>
        <position position="102"/>
    </location>
    <ligand>
        <name>Zn(2+)</name>
        <dbReference type="ChEBI" id="CHEBI:29105"/>
        <label>2</label>
    </ligand>
</feature>
<feature type="binding site" evidence="1">
    <location>
        <position position="108"/>
    </location>
    <ligand>
        <name>Zn(2+)</name>
        <dbReference type="ChEBI" id="CHEBI:29105"/>
        <label>1</label>
    </ligand>
</feature>
<feature type="binding site" evidence="1">
    <location>
        <position position="112"/>
    </location>
    <ligand>
        <name>Zn(2+)</name>
        <dbReference type="ChEBI" id="CHEBI:29105"/>
        <label>1</label>
    </ligand>
</feature>
<feature type="binding site" evidence="1">
    <location>
        <position position="121"/>
    </location>
    <ligand>
        <name>Zn(2+)</name>
        <dbReference type="ChEBI" id="CHEBI:29105"/>
        <label>2</label>
    </ligand>
</feature>
<feature type="binding site" evidence="1">
    <location>
        <position position="125"/>
    </location>
    <ligand>
        <name>Zn(2+)</name>
        <dbReference type="ChEBI" id="CHEBI:29105"/>
        <label>2</label>
    </ligand>
</feature>
<reference key="1">
    <citation type="journal article" date="2005" name="Nature">
        <title>The map-based sequence of the rice genome.</title>
        <authorList>
            <consortium name="International rice genome sequencing project (IRGSP)"/>
        </authorList>
    </citation>
    <scope>NUCLEOTIDE SEQUENCE [LARGE SCALE GENOMIC DNA]</scope>
    <source>
        <strain>cv. Nipponbare</strain>
    </source>
</reference>
<reference key="2">
    <citation type="journal article" date="2008" name="Nucleic Acids Res.">
        <title>The rice annotation project database (RAP-DB): 2008 update.</title>
        <authorList>
            <consortium name="The rice annotation project (RAP)"/>
        </authorList>
    </citation>
    <scope>GENOME REANNOTATION</scope>
    <source>
        <strain>cv. Nipponbare</strain>
    </source>
</reference>
<reference key="3">
    <citation type="journal article" date="2013" name="Rice">
        <title>Improvement of the Oryza sativa Nipponbare reference genome using next generation sequence and optical map data.</title>
        <authorList>
            <person name="Kawahara Y."/>
            <person name="de la Bastide M."/>
            <person name="Hamilton J.P."/>
            <person name="Kanamori H."/>
            <person name="McCombie W.R."/>
            <person name="Ouyang S."/>
            <person name="Schwartz D.C."/>
            <person name="Tanaka T."/>
            <person name="Wu J."/>
            <person name="Zhou S."/>
            <person name="Childs K.L."/>
            <person name="Davidson R.M."/>
            <person name="Lin H."/>
            <person name="Quesada-Ocampo L."/>
            <person name="Vaillancourt B."/>
            <person name="Sakai H."/>
            <person name="Lee S.S."/>
            <person name="Kim J."/>
            <person name="Numa H."/>
            <person name="Itoh T."/>
            <person name="Buell C.R."/>
            <person name="Matsumoto T."/>
        </authorList>
    </citation>
    <scope>GENOME REANNOTATION</scope>
    <source>
        <strain>cv. Nipponbare</strain>
    </source>
</reference>
<reference key="4">
    <citation type="journal article" date="2018" name="Front. Plant Sci.">
        <title>Characterization of the ubiquitin C-terminal hydrolase and ubiquitin-specific protease families in rice (Oryza sativa).</title>
        <authorList>
            <person name="Wang D.H."/>
            <person name="Song W."/>
            <person name="Wei S.W."/>
            <person name="Zheng Y.F."/>
            <person name="Chen Z.S."/>
            <person name="Han J.D."/>
            <person name="Zhang H.T."/>
            <person name="Luo J.C."/>
            <person name="Qin Y.M."/>
            <person name="Xu Z.H."/>
            <person name="Bai S.N."/>
        </authorList>
    </citation>
    <scope>GENE FAMILY</scope>
</reference>
<reference key="5">
    <citation type="journal article" date="2019" name="Plant Physiol.">
        <title>Ubiquitin specific protease 15 has an important role in regulating grain width and size in rice.</title>
        <authorList>
            <person name="Shi C."/>
            <person name="Ren Y."/>
            <person name="Liu L."/>
            <person name="Wang F."/>
            <person name="Zhang H."/>
            <person name="Tian P."/>
            <person name="Pan T."/>
            <person name="Wang Y."/>
            <person name="Jing R."/>
            <person name="Liu T."/>
            <person name="Wu F."/>
            <person name="Lin Q."/>
            <person name="Lei C."/>
            <person name="Zhang X."/>
            <person name="Zhu S."/>
            <person name="Guo X."/>
            <person name="Wang J."/>
            <person name="Zhao Z."/>
            <person name="Wang J."/>
            <person name="Zhai H."/>
            <person name="Cheng Z."/>
            <person name="Wan J."/>
        </authorList>
    </citation>
    <scope>FUNCTION</scope>
    <scope>SUBCELLULAR LOCATION</scope>
    <scope>TISSUE SPECIFICITY</scope>
</reference>
<organism>
    <name type="scientific">Oryza sativa subsp. japonica</name>
    <name type="common">Rice</name>
    <dbReference type="NCBI Taxonomy" id="39947"/>
    <lineage>
        <taxon>Eukaryota</taxon>
        <taxon>Viridiplantae</taxon>
        <taxon>Streptophyta</taxon>
        <taxon>Embryophyta</taxon>
        <taxon>Tracheophyta</taxon>
        <taxon>Spermatophyta</taxon>
        <taxon>Magnoliopsida</taxon>
        <taxon>Liliopsida</taxon>
        <taxon>Poales</taxon>
        <taxon>Poaceae</taxon>
        <taxon>BOP clade</taxon>
        <taxon>Oryzoideae</taxon>
        <taxon>Oryzeae</taxon>
        <taxon>Oryzinae</taxon>
        <taxon>Oryza</taxon>
        <taxon>Oryza sativa</taxon>
    </lineage>
</organism>
<sequence>MLQPRESDVPVLFVVFIVLPVIAYFLLGRWHDAVSKKARVSVLAQRAAEETFKVETMATPDVILPGPSLRPMPYMRSAPSARPEYHECATCHGPAKTRCSRCKSVRYCSGKCQIIHWRQGHKQTCQQWNGFGTSSSGGLPPTENTEQMPFLSNLNSPLRGSDVHLHDMDFDTMSEPSFVTTDSYNLDTSPFLSDRSNMNKPNQFLHTSENGAAIGSYEKNDYSIDGEVPSSEILSGNKGLNNSSGSGENCGNRDVIYPLNSVVHQPNNYAPEIRKRPKASITVYESDKGVYLTSDMISSGEGPYASAAESLQRSNSSGNVTGKGNMIHKKPPYPSGKVSSSQKSQEKVLTSHQYDGHEKNPHNKNEQRSTKTAVSTNSSLQGCNGISKAGASKVEALKKPSKFLKTSLVGLINDNKRSKVLFPYEDLVKFFQYEVRGISPRGLFNCGNSCYANAVLQCLMCTKPLMIYLLLRLHSKDCCSKNWCLMCELEQYASTLRESGGPVSPSRILSNLRNIGCRLGGGSQEDAHEFLRHLVMSMQGACLDGLGGEKQVEASLQETTLIQQMFGGRLKSKVKCLRCYHESERYENIMDLTLEIHGWVESLQDALTQFTAPEDLDGENMYKCGRCSAYVKARKQLSVHEVPNILTVVLKRFQTGKYGKINKCVTFPDMLDMVPFVTGAGDNPPLYFLYAVVVHVDTENASFSGHYISYVKDMQGTWLRIDDSEVQAVSLNQVMSEGAYMLFYMRSFPRPPKIYIEKGLSSVPTCSKRHSSKSSKGSKQDLNHTESLFASSDQTYGIYDFRPDNGYIQDQHAALRTRNFYHTDDAFADSISTDFSDATSSEWSLFTSSDESSFTTESTRDSFSVVDYGDNAGLDPISSIFGPYYAQDHPPGSFASCTRLSPSNPQTRYFQENTGFVSDSSMPAHLPGNVHRGRYPDRACSSSAEPPASANPRSVYGRYGLSREGFVQTSGFCQM</sequence>
<dbReference type="EC" id="3.4.19.12" evidence="4"/>
<dbReference type="EMBL" id="AP005004">
    <property type="protein sequence ID" value="BAD28270.1"/>
    <property type="status" value="ALT_INIT"/>
    <property type="molecule type" value="Genomic_DNA"/>
</dbReference>
<dbReference type="EMBL" id="AP008208">
    <property type="protein sequence ID" value="BAF08329.1"/>
    <property type="molecule type" value="Genomic_DNA"/>
</dbReference>
<dbReference type="EMBL" id="AP014958">
    <property type="protein sequence ID" value="BAS77856.1"/>
    <property type="molecule type" value="Genomic_DNA"/>
</dbReference>
<dbReference type="SMR" id="Q0E2F9"/>
<dbReference type="FunCoup" id="Q0E2F9">
    <property type="interactions" value="65"/>
</dbReference>
<dbReference type="STRING" id="39947.Q0E2F9"/>
<dbReference type="MEROPS" id="C19.096"/>
<dbReference type="PaxDb" id="39947-Q0E2F9"/>
<dbReference type="EnsemblPlants" id="Os02t0244300-01">
    <property type="protein sequence ID" value="Os02t0244300-01"/>
    <property type="gene ID" value="Os02g0244300"/>
</dbReference>
<dbReference type="Gramene" id="Os02t0244300-01">
    <property type="protein sequence ID" value="Os02t0244300-01"/>
    <property type="gene ID" value="Os02g0244300"/>
</dbReference>
<dbReference type="KEGG" id="dosa:Os02g0244300"/>
<dbReference type="KEGG" id="osa:4328857"/>
<dbReference type="eggNOG" id="KOG1865">
    <property type="taxonomic scope" value="Eukaryota"/>
</dbReference>
<dbReference type="HOGENOM" id="CLU_007397_1_0_1"/>
<dbReference type="InParanoid" id="Q0E2F9"/>
<dbReference type="OMA" id="HECARCS"/>
<dbReference type="OrthoDB" id="420187at2759"/>
<dbReference type="Proteomes" id="UP000000763">
    <property type="component" value="Chromosome 2"/>
</dbReference>
<dbReference type="Proteomes" id="UP000059680">
    <property type="component" value="Chromosome 2"/>
</dbReference>
<dbReference type="GO" id="GO:0005829">
    <property type="term" value="C:cytosol"/>
    <property type="evidence" value="ECO:0000318"/>
    <property type="project" value="GO_Central"/>
</dbReference>
<dbReference type="GO" id="GO:0005634">
    <property type="term" value="C:nucleus"/>
    <property type="evidence" value="ECO:0000318"/>
    <property type="project" value="GO_Central"/>
</dbReference>
<dbReference type="GO" id="GO:0004843">
    <property type="term" value="F:cysteine-type deubiquitinase activity"/>
    <property type="evidence" value="ECO:0000318"/>
    <property type="project" value="GO_Central"/>
</dbReference>
<dbReference type="GO" id="GO:0008270">
    <property type="term" value="F:zinc ion binding"/>
    <property type="evidence" value="ECO:0007669"/>
    <property type="project" value="UniProtKB-KW"/>
</dbReference>
<dbReference type="GO" id="GO:0051301">
    <property type="term" value="P:cell division"/>
    <property type="evidence" value="ECO:0007669"/>
    <property type="project" value="EnsemblPlants"/>
</dbReference>
<dbReference type="GO" id="GO:0009908">
    <property type="term" value="P:flower development"/>
    <property type="evidence" value="ECO:0007669"/>
    <property type="project" value="EnsemblPlants"/>
</dbReference>
<dbReference type="GO" id="GO:0010154">
    <property type="term" value="P:fruit development"/>
    <property type="evidence" value="ECO:0007669"/>
    <property type="project" value="EnsemblPlants"/>
</dbReference>
<dbReference type="GO" id="GO:0048366">
    <property type="term" value="P:leaf development"/>
    <property type="evidence" value="ECO:0007669"/>
    <property type="project" value="EnsemblPlants"/>
</dbReference>
<dbReference type="GO" id="GO:0016579">
    <property type="term" value="P:protein deubiquitination"/>
    <property type="evidence" value="ECO:0007669"/>
    <property type="project" value="EnsemblPlants"/>
</dbReference>
<dbReference type="GO" id="GO:0006508">
    <property type="term" value="P:proteolysis"/>
    <property type="evidence" value="ECO:0007669"/>
    <property type="project" value="UniProtKB-KW"/>
</dbReference>
<dbReference type="GO" id="GO:0031647">
    <property type="term" value="P:regulation of protein stability"/>
    <property type="evidence" value="ECO:0000318"/>
    <property type="project" value="GO_Central"/>
</dbReference>
<dbReference type="GO" id="GO:0048364">
    <property type="term" value="P:root development"/>
    <property type="evidence" value="ECO:0007669"/>
    <property type="project" value="EnsemblPlants"/>
</dbReference>
<dbReference type="CDD" id="cd02661">
    <property type="entry name" value="Peptidase_C19E"/>
    <property type="match status" value="1"/>
</dbReference>
<dbReference type="FunFam" id="3.90.70.10:FF:000026">
    <property type="entry name" value="Ubiquitin carboxyl-terminal hydrolase 15"/>
    <property type="match status" value="1"/>
</dbReference>
<dbReference type="FunFam" id="6.10.140.2220:FF:000006">
    <property type="entry name" value="Ubiquitin carboxyl-terminal hydrolase 15"/>
    <property type="match status" value="1"/>
</dbReference>
<dbReference type="Gene3D" id="6.10.140.2220">
    <property type="match status" value="1"/>
</dbReference>
<dbReference type="Gene3D" id="3.90.70.10">
    <property type="entry name" value="Cysteine proteinases"/>
    <property type="match status" value="1"/>
</dbReference>
<dbReference type="InterPro" id="IPR038765">
    <property type="entry name" value="Papain-like_cys_pep_sf"/>
</dbReference>
<dbReference type="InterPro" id="IPR050164">
    <property type="entry name" value="Peptidase_C19"/>
</dbReference>
<dbReference type="InterPro" id="IPR001394">
    <property type="entry name" value="Peptidase_C19_UCH"/>
</dbReference>
<dbReference type="InterPro" id="IPR018200">
    <property type="entry name" value="USP_CS"/>
</dbReference>
<dbReference type="InterPro" id="IPR028889">
    <property type="entry name" value="USP_dom"/>
</dbReference>
<dbReference type="InterPro" id="IPR002893">
    <property type="entry name" value="Znf_MYND"/>
</dbReference>
<dbReference type="PANTHER" id="PTHR24006">
    <property type="entry name" value="UBIQUITIN CARBOXYL-TERMINAL HYDROLASE"/>
    <property type="match status" value="1"/>
</dbReference>
<dbReference type="PANTHER" id="PTHR24006:SF685">
    <property type="entry name" value="UBIQUITIN CARBOXYL-TERMINAL HYDROLASE 15"/>
    <property type="match status" value="1"/>
</dbReference>
<dbReference type="Pfam" id="PF00443">
    <property type="entry name" value="UCH"/>
    <property type="match status" value="1"/>
</dbReference>
<dbReference type="Pfam" id="PF01753">
    <property type="entry name" value="zf-MYND"/>
    <property type="match status" value="1"/>
</dbReference>
<dbReference type="SUPFAM" id="SSF54001">
    <property type="entry name" value="Cysteine proteinases"/>
    <property type="match status" value="1"/>
</dbReference>
<dbReference type="SUPFAM" id="SSF144232">
    <property type="entry name" value="HIT/MYND zinc finger-like"/>
    <property type="match status" value="1"/>
</dbReference>
<dbReference type="PROSITE" id="PS00972">
    <property type="entry name" value="USP_1"/>
    <property type="match status" value="1"/>
</dbReference>
<dbReference type="PROSITE" id="PS50235">
    <property type="entry name" value="USP_3"/>
    <property type="match status" value="1"/>
</dbReference>
<dbReference type="PROSITE" id="PS01360">
    <property type="entry name" value="ZF_MYND_1"/>
    <property type="match status" value="1"/>
</dbReference>
<dbReference type="PROSITE" id="PS50865">
    <property type="entry name" value="ZF_MYND_2"/>
    <property type="match status" value="1"/>
</dbReference>
<keyword id="KW-0963">Cytoplasm</keyword>
<keyword id="KW-0378">Hydrolase</keyword>
<keyword id="KW-0479">Metal-binding</keyword>
<keyword id="KW-0539">Nucleus</keyword>
<keyword id="KW-0645">Protease</keyword>
<keyword id="KW-1185">Reference proteome</keyword>
<keyword id="KW-0788">Thiol protease</keyword>
<keyword id="KW-0833">Ubl conjugation pathway</keyword>
<keyword id="KW-0862">Zinc</keyword>
<keyword id="KW-0863">Zinc-finger</keyword>
<protein>
    <recommendedName>
        <fullName evidence="6">Ubiquitin C-terminal hydrolase 15</fullName>
        <ecNumber evidence="4">3.4.19.12</ecNumber>
    </recommendedName>
    <alternativeName>
        <fullName evidence="6">Deubiquitinating enzyme 15</fullName>
    </alternativeName>
    <alternativeName>
        <fullName evidence="5">Protein LARGE GRAIN 1</fullName>
    </alternativeName>
    <alternativeName>
        <fullName evidence="6">Ubiquitin thioesterase 15</fullName>
    </alternativeName>
    <alternativeName>
        <fullName evidence="5">Ubiquitin-specific protease 15</fullName>
        <shortName evidence="5">OsUBP15</shortName>
    </alternativeName>
</protein>
<comment type="function">
    <text evidence="4 7">Recognizes and hydrolyzes the peptide bond at the C-terminal Gly of ubiquitin. Involved in the processing of poly-ubiquitin precursors as well as that of ubiquitinated proteins (Probable). Involved in the regulation of grain size (PubMed:30796160). Acts as positive regulator of grain width and size by influencing cell proliferation (PubMed:30796160). Functions partially antagonistically with GW2 in the regulation of grain width (PubMed:30796160). Possesses deubiquitinating enzyme activity in vitro (PubMed:30796160).</text>
</comment>
<comment type="catalytic activity">
    <reaction evidence="4">
        <text>Thiol-dependent hydrolysis of ester, thioester, amide, peptide and isopeptide bonds formed by the C-terminal Gly of ubiquitin (a 76-residue protein attached to proteins as an intracellular targeting signal).</text>
        <dbReference type="EC" id="3.4.19.12"/>
    </reaction>
</comment>
<comment type="subcellular location">
    <subcellularLocation>
        <location evidence="4">Cytoplasm</location>
    </subcellularLocation>
    <subcellularLocation>
        <location evidence="4">Nucleus</location>
    </subcellularLocation>
</comment>
<comment type="tissue specificity">
    <text evidence="4">Highly expressed in young panicles (PubMed:30796160). Expressed in roots, leaf blades, leaf sheaths and stems (PubMed:30796160). Expressed at low levels in brown grains (PubMed:30796160).</text>
</comment>
<comment type="miscellaneous">
    <text evidence="4">The dominant gain-of-function large grain1-D (lg1-D) develops significantly enlarged grains.</text>
</comment>
<comment type="similarity">
    <text evidence="6">Belongs to the peptidase C19 family.</text>
</comment>
<comment type="sequence caution" evidence="6">
    <conflict type="erroneous initiation">
        <sequence resource="EMBL-CDS" id="BAD28270"/>
    </conflict>
    <text>Truncated N-terminus.</text>
</comment>
<gene>
    <name evidence="5" type="primary">UBP15</name>
    <name evidence="5" type="synonym">LG1</name>
    <name evidence="9" type="ordered locus">Os02g0244300</name>
    <name evidence="6" type="ordered locus">LOC_Os02g14730</name>
    <name evidence="8" type="ORF">P0503B05.35</name>
</gene>
<evidence type="ECO:0000255" key="1">
    <source>
        <dbReference type="PROSITE-ProRule" id="PRU00134"/>
    </source>
</evidence>
<evidence type="ECO:0000255" key="2">
    <source>
        <dbReference type="PROSITE-ProRule" id="PRU01035"/>
    </source>
</evidence>
<evidence type="ECO:0000256" key="3">
    <source>
        <dbReference type="SAM" id="MobiDB-lite"/>
    </source>
</evidence>
<evidence type="ECO:0000269" key="4">
    <source>
    </source>
</evidence>
<evidence type="ECO:0000303" key="5">
    <source>
    </source>
</evidence>
<evidence type="ECO:0000305" key="6"/>
<evidence type="ECO:0000305" key="7">
    <source>
    </source>
</evidence>
<evidence type="ECO:0000312" key="8">
    <source>
        <dbReference type="EMBL" id="BAD28270.1"/>
    </source>
</evidence>
<evidence type="ECO:0000312" key="9">
    <source>
        <dbReference type="EMBL" id="BAS77856.1"/>
    </source>
</evidence>
<accession>Q0E2F9</accession>
<accession>A0A0P0VH87</accession>
<accession>Q6ESV0</accession>
<proteinExistence type="evidence at transcript level"/>
<name>UBP15_ORYSJ</name>